<proteinExistence type="inferred from homology"/>
<protein>
    <recommendedName>
        <fullName evidence="1">Recombination protein RecR</fullName>
    </recommendedName>
</protein>
<dbReference type="EMBL" id="CP000100">
    <property type="protein sequence ID" value="ABB57399.1"/>
    <property type="status" value="ALT_INIT"/>
    <property type="molecule type" value="Genomic_DNA"/>
</dbReference>
<dbReference type="SMR" id="Q31NH0"/>
<dbReference type="STRING" id="1140.Synpcc7942_1369"/>
<dbReference type="PaxDb" id="1140-Synpcc7942_1369"/>
<dbReference type="KEGG" id="syf:Synpcc7942_1369"/>
<dbReference type="eggNOG" id="COG0353">
    <property type="taxonomic scope" value="Bacteria"/>
</dbReference>
<dbReference type="HOGENOM" id="CLU_060739_1_0_3"/>
<dbReference type="BioCyc" id="SYNEL:SYNPCC7942_1369-MONOMER"/>
<dbReference type="Proteomes" id="UP000889800">
    <property type="component" value="Chromosome"/>
</dbReference>
<dbReference type="GO" id="GO:0003677">
    <property type="term" value="F:DNA binding"/>
    <property type="evidence" value="ECO:0007669"/>
    <property type="project" value="UniProtKB-UniRule"/>
</dbReference>
<dbReference type="GO" id="GO:0008270">
    <property type="term" value="F:zinc ion binding"/>
    <property type="evidence" value="ECO:0007669"/>
    <property type="project" value="UniProtKB-KW"/>
</dbReference>
<dbReference type="GO" id="GO:0006310">
    <property type="term" value="P:DNA recombination"/>
    <property type="evidence" value="ECO:0007669"/>
    <property type="project" value="UniProtKB-UniRule"/>
</dbReference>
<dbReference type="GO" id="GO:0006281">
    <property type="term" value="P:DNA repair"/>
    <property type="evidence" value="ECO:0007669"/>
    <property type="project" value="UniProtKB-UniRule"/>
</dbReference>
<dbReference type="CDD" id="cd01025">
    <property type="entry name" value="TOPRIM_recR"/>
    <property type="match status" value="1"/>
</dbReference>
<dbReference type="Gene3D" id="3.40.1360.10">
    <property type="match status" value="1"/>
</dbReference>
<dbReference type="Gene3D" id="6.10.250.240">
    <property type="match status" value="1"/>
</dbReference>
<dbReference type="Gene3D" id="1.10.8.420">
    <property type="entry name" value="RecR Domain 1"/>
    <property type="match status" value="1"/>
</dbReference>
<dbReference type="HAMAP" id="MF_00017">
    <property type="entry name" value="RecR"/>
    <property type="match status" value="1"/>
</dbReference>
<dbReference type="InterPro" id="IPR000093">
    <property type="entry name" value="DNA_Rcmb_RecR"/>
</dbReference>
<dbReference type="InterPro" id="IPR023627">
    <property type="entry name" value="Rcmb_RecR"/>
</dbReference>
<dbReference type="InterPro" id="IPR015967">
    <property type="entry name" value="Rcmb_RecR_Znf"/>
</dbReference>
<dbReference type="InterPro" id="IPR006171">
    <property type="entry name" value="TOPRIM_dom"/>
</dbReference>
<dbReference type="InterPro" id="IPR034137">
    <property type="entry name" value="TOPRIM_RecR"/>
</dbReference>
<dbReference type="NCBIfam" id="TIGR00615">
    <property type="entry name" value="recR"/>
    <property type="match status" value="1"/>
</dbReference>
<dbReference type="PANTHER" id="PTHR30446">
    <property type="entry name" value="RECOMBINATION PROTEIN RECR"/>
    <property type="match status" value="1"/>
</dbReference>
<dbReference type="PANTHER" id="PTHR30446:SF0">
    <property type="entry name" value="RECOMBINATION PROTEIN RECR"/>
    <property type="match status" value="1"/>
</dbReference>
<dbReference type="Pfam" id="PF21175">
    <property type="entry name" value="RecR_C"/>
    <property type="match status" value="1"/>
</dbReference>
<dbReference type="Pfam" id="PF21176">
    <property type="entry name" value="RecR_HhH"/>
    <property type="match status" value="1"/>
</dbReference>
<dbReference type="Pfam" id="PF02132">
    <property type="entry name" value="RecR_ZnF"/>
    <property type="match status" value="1"/>
</dbReference>
<dbReference type="Pfam" id="PF13662">
    <property type="entry name" value="Toprim_4"/>
    <property type="match status" value="1"/>
</dbReference>
<dbReference type="SMART" id="SM00493">
    <property type="entry name" value="TOPRIM"/>
    <property type="match status" value="1"/>
</dbReference>
<dbReference type="SUPFAM" id="SSF111304">
    <property type="entry name" value="Recombination protein RecR"/>
    <property type="match status" value="1"/>
</dbReference>
<dbReference type="PROSITE" id="PS01300">
    <property type="entry name" value="RECR"/>
    <property type="match status" value="1"/>
</dbReference>
<dbReference type="PROSITE" id="PS50880">
    <property type="entry name" value="TOPRIM"/>
    <property type="match status" value="1"/>
</dbReference>
<sequence length="199" mass="21983">MSVYTRPLARLIEHLQKLPGVGPKTAQRLALHLIQRPEAEIAAFAEALLAAKQQVGHCQRCFHLSSEDLCNICRDPKRDAQTICVVADPRDVIALEKTREYKGLYHVLGGLISPMDGIGPEQLTVQALVRRVAQEQTQEVIMAISPSVEGETTTLYVGQLLKPFTRVTRIAFGLPMGGDLEYADEVTLARALEGRRDLT</sequence>
<feature type="chain" id="PRO_0000322962" description="Recombination protein RecR">
    <location>
        <begin position="1"/>
        <end position="199"/>
    </location>
</feature>
<feature type="domain" description="Toprim" evidence="1">
    <location>
        <begin position="81"/>
        <end position="175"/>
    </location>
</feature>
<feature type="zinc finger region" description="C4-type" evidence="1">
    <location>
        <begin position="58"/>
        <end position="73"/>
    </location>
</feature>
<organism>
    <name type="scientific">Synechococcus elongatus (strain ATCC 33912 / PCC 7942 / FACHB-805)</name>
    <name type="common">Anacystis nidulans R2</name>
    <dbReference type="NCBI Taxonomy" id="1140"/>
    <lineage>
        <taxon>Bacteria</taxon>
        <taxon>Bacillati</taxon>
        <taxon>Cyanobacteriota</taxon>
        <taxon>Cyanophyceae</taxon>
        <taxon>Synechococcales</taxon>
        <taxon>Synechococcaceae</taxon>
        <taxon>Synechococcus</taxon>
    </lineage>
</organism>
<evidence type="ECO:0000255" key="1">
    <source>
        <dbReference type="HAMAP-Rule" id="MF_00017"/>
    </source>
</evidence>
<evidence type="ECO:0000305" key="2"/>
<comment type="function">
    <text evidence="1">May play a role in DNA repair. It seems to be involved in an RecBC-independent recombinational process of DNA repair. It may act with RecF and RecO.</text>
</comment>
<comment type="similarity">
    <text evidence="1">Belongs to the RecR family.</text>
</comment>
<comment type="sequence caution" evidence="2">
    <conflict type="erroneous initiation">
        <sequence resource="EMBL-CDS" id="ABB57399"/>
    </conflict>
</comment>
<name>RECR_SYNE7</name>
<accession>Q31NH0</accession>
<gene>
    <name evidence="1" type="primary">recR</name>
    <name type="ordered locus">Synpcc7942_1369</name>
</gene>
<keyword id="KW-0227">DNA damage</keyword>
<keyword id="KW-0233">DNA recombination</keyword>
<keyword id="KW-0234">DNA repair</keyword>
<keyword id="KW-0479">Metal-binding</keyword>
<keyword id="KW-1185">Reference proteome</keyword>
<keyword id="KW-0862">Zinc</keyword>
<keyword id="KW-0863">Zinc-finger</keyword>
<reference key="1">
    <citation type="submission" date="2005-08" db="EMBL/GenBank/DDBJ databases">
        <title>Complete sequence of chromosome 1 of Synechococcus elongatus PCC 7942.</title>
        <authorList>
            <consortium name="US DOE Joint Genome Institute"/>
            <person name="Copeland A."/>
            <person name="Lucas S."/>
            <person name="Lapidus A."/>
            <person name="Barry K."/>
            <person name="Detter J.C."/>
            <person name="Glavina T."/>
            <person name="Hammon N."/>
            <person name="Israni S."/>
            <person name="Pitluck S."/>
            <person name="Schmutz J."/>
            <person name="Larimer F."/>
            <person name="Land M."/>
            <person name="Kyrpides N."/>
            <person name="Lykidis A."/>
            <person name="Golden S."/>
            <person name="Richardson P."/>
        </authorList>
    </citation>
    <scope>NUCLEOTIDE SEQUENCE [LARGE SCALE GENOMIC DNA]</scope>
    <source>
        <strain>ATCC 33912 / PCC 7942 / FACHB-805</strain>
    </source>
</reference>